<accession>P0ADW9</accession>
<accession>P56622</accession>
<protein>
    <recommendedName>
        <fullName>Uncharacterized protein YheV</fullName>
    </recommendedName>
</protein>
<sequence length="66" mass="7599">MAIRKRFIAGAKCPACQAQDSMAMWRENNIDIVECVKCGHQMREADKEARDHVRKDEQVIGIFHPD</sequence>
<keyword id="KW-1185">Reference proteome</keyword>
<reference key="1">
    <citation type="journal article" date="2002" name="Proc. Natl. Acad. Sci. U.S.A.">
        <title>Extensive mosaic structure revealed by the complete genome sequence of uropathogenic Escherichia coli.</title>
        <authorList>
            <person name="Welch R.A."/>
            <person name="Burland V."/>
            <person name="Plunkett G. III"/>
            <person name="Redford P."/>
            <person name="Roesch P."/>
            <person name="Rasko D."/>
            <person name="Buckles E.L."/>
            <person name="Liou S.-R."/>
            <person name="Boutin A."/>
            <person name="Hackett J."/>
            <person name="Stroud D."/>
            <person name="Mayhew G.F."/>
            <person name="Rose D.J."/>
            <person name="Zhou S."/>
            <person name="Schwartz D.C."/>
            <person name="Perna N.T."/>
            <person name="Mobley H.L.T."/>
            <person name="Donnenberg M.S."/>
            <person name="Blattner F.R."/>
        </authorList>
    </citation>
    <scope>NUCLEOTIDE SEQUENCE [LARGE SCALE GENOMIC DNA]</scope>
    <source>
        <strain>CFT073 / ATCC 700928 / UPEC</strain>
    </source>
</reference>
<organism>
    <name type="scientific">Escherichia coli O6:H1 (strain CFT073 / ATCC 700928 / UPEC)</name>
    <dbReference type="NCBI Taxonomy" id="199310"/>
    <lineage>
        <taxon>Bacteria</taxon>
        <taxon>Pseudomonadati</taxon>
        <taxon>Pseudomonadota</taxon>
        <taxon>Gammaproteobacteria</taxon>
        <taxon>Enterobacterales</taxon>
        <taxon>Enterobacteriaceae</taxon>
        <taxon>Escherichia</taxon>
    </lineage>
</organism>
<proteinExistence type="predicted"/>
<feature type="chain" id="PRO_0000169515" description="Uncharacterized protein YheV">
    <location>
        <begin position="1"/>
        <end position="66"/>
    </location>
</feature>
<gene>
    <name type="primary">yheV</name>
    <name type="ordered locus">c4124</name>
</gene>
<name>YHEV_ECOL6</name>
<dbReference type="EMBL" id="AE014075">
    <property type="protein sequence ID" value="AAN82562.1"/>
    <property type="molecule type" value="Genomic_DNA"/>
</dbReference>
<dbReference type="RefSeq" id="WP_001007730.1">
    <property type="nucleotide sequence ID" value="NZ_CP051263.1"/>
</dbReference>
<dbReference type="STRING" id="199310.c4124"/>
<dbReference type="KEGG" id="ecc:c4124"/>
<dbReference type="eggNOG" id="COG3529">
    <property type="taxonomic scope" value="Bacteria"/>
</dbReference>
<dbReference type="HOGENOM" id="CLU_186875_0_0_6"/>
<dbReference type="BioCyc" id="ECOL199310:C4124-MONOMER"/>
<dbReference type="Proteomes" id="UP000001410">
    <property type="component" value="Chromosome"/>
</dbReference>
<dbReference type="InterPro" id="IPR012658">
    <property type="entry name" value="YheV"/>
</dbReference>
<dbReference type="NCBIfam" id="TIGR02443">
    <property type="entry name" value="YheV family putative zinc ribbon protein"/>
    <property type="match status" value="1"/>
</dbReference>
<dbReference type="Pfam" id="PF09526">
    <property type="entry name" value="DUF2387"/>
    <property type="match status" value="1"/>
</dbReference>